<keyword id="KW-0067">ATP-binding</keyword>
<keyword id="KW-0173">Coenzyme A biosynthesis</keyword>
<keyword id="KW-0963">Cytoplasm</keyword>
<keyword id="KW-0460">Magnesium</keyword>
<keyword id="KW-0547">Nucleotide-binding</keyword>
<keyword id="KW-0548">Nucleotidyltransferase</keyword>
<keyword id="KW-1185">Reference proteome</keyword>
<keyword id="KW-0808">Transferase</keyword>
<gene>
    <name evidence="1" type="primary">coaD</name>
    <name type="ordered locus">BT_3034</name>
</gene>
<reference key="1">
    <citation type="journal article" date="2003" name="Science">
        <title>A genomic view of the human-Bacteroides thetaiotaomicron symbiosis.</title>
        <authorList>
            <person name="Xu J."/>
            <person name="Bjursell M.K."/>
            <person name="Himrod J."/>
            <person name="Deng S."/>
            <person name="Carmichael L.K."/>
            <person name="Chiang H.C."/>
            <person name="Hooper L.V."/>
            <person name="Gordon J.I."/>
        </authorList>
    </citation>
    <scope>NUCLEOTIDE SEQUENCE [LARGE SCALE GENOMIC DNA]</scope>
    <source>
        <strain>ATCC 29148 / DSM 2079 / JCM 5827 / CCUG 10774 / NCTC 10582 / VPI-5482 / E50</strain>
    </source>
</reference>
<accession>Q8A3C0</accession>
<protein>
    <recommendedName>
        <fullName evidence="1">Phosphopantetheine adenylyltransferase</fullName>
        <ecNumber evidence="1">2.7.7.3</ecNumber>
    </recommendedName>
    <alternativeName>
        <fullName evidence="1">Dephospho-CoA pyrophosphorylase</fullName>
    </alternativeName>
    <alternativeName>
        <fullName evidence="1">Pantetheine-phosphate adenylyltransferase</fullName>
        <shortName evidence="1">PPAT</shortName>
    </alternativeName>
</protein>
<organism>
    <name type="scientific">Bacteroides thetaiotaomicron (strain ATCC 29148 / DSM 2079 / JCM 5827 / CCUG 10774 / NCTC 10582 / VPI-5482 / E50)</name>
    <dbReference type="NCBI Taxonomy" id="226186"/>
    <lineage>
        <taxon>Bacteria</taxon>
        <taxon>Pseudomonadati</taxon>
        <taxon>Bacteroidota</taxon>
        <taxon>Bacteroidia</taxon>
        <taxon>Bacteroidales</taxon>
        <taxon>Bacteroidaceae</taxon>
        <taxon>Bacteroides</taxon>
    </lineage>
</organism>
<sequence length="151" mass="17556">MRKAIFPGTFDPFTIGHYSVVERALTFMDEIIIGIGINENKNTYFPIEKREEMIRNLYKDNPRIKVMSYDCLTIDFAQQVEAQFIVRGIRTVKDFEYEETIADINRKLAGIETILLFTEPELTCVSSTIVRELLTYNKDISQFIPEGMEIN</sequence>
<proteinExistence type="inferred from homology"/>
<feature type="chain" id="PRO_0000156170" description="Phosphopantetheine adenylyltransferase">
    <location>
        <begin position="1"/>
        <end position="151"/>
    </location>
</feature>
<feature type="binding site" evidence="1">
    <location>
        <begin position="9"/>
        <end position="10"/>
    </location>
    <ligand>
        <name>ATP</name>
        <dbReference type="ChEBI" id="CHEBI:30616"/>
    </ligand>
</feature>
<feature type="binding site" evidence="1">
    <location>
        <position position="9"/>
    </location>
    <ligand>
        <name>substrate</name>
    </ligand>
</feature>
<feature type="binding site" evidence="1">
    <location>
        <position position="17"/>
    </location>
    <ligand>
        <name>ATP</name>
        <dbReference type="ChEBI" id="CHEBI:30616"/>
    </ligand>
</feature>
<feature type="binding site" evidence="1">
    <location>
        <position position="41"/>
    </location>
    <ligand>
        <name>substrate</name>
    </ligand>
</feature>
<feature type="binding site" evidence="1">
    <location>
        <position position="73"/>
    </location>
    <ligand>
        <name>substrate</name>
    </ligand>
</feature>
<feature type="binding site" evidence="1">
    <location>
        <position position="87"/>
    </location>
    <ligand>
        <name>substrate</name>
    </ligand>
</feature>
<feature type="binding site" evidence="1">
    <location>
        <begin position="88"/>
        <end position="90"/>
    </location>
    <ligand>
        <name>ATP</name>
        <dbReference type="ChEBI" id="CHEBI:30616"/>
    </ligand>
</feature>
<feature type="binding site" evidence="1">
    <location>
        <position position="98"/>
    </location>
    <ligand>
        <name>ATP</name>
        <dbReference type="ChEBI" id="CHEBI:30616"/>
    </ligand>
</feature>
<feature type="binding site" evidence="1">
    <location>
        <begin position="122"/>
        <end position="128"/>
    </location>
    <ligand>
        <name>ATP</name>
        <dbReference type="ChEBI" id="CHEBI:30616"/>
    </ligand>
</feature>
<feature type="site" description="Transition state stabilizer" evidence="1">
    <location>
        <position position="17"/>
    </location>
</feature>
<dbReference type="EC" id="2.7.7.3" evidence="1"/>
<dbReference type="EMBL" id="AE015928">
    <property type="protein sequence ID" value="AAO78140.1"/>
    <property type="molecule type" value="Genomic_DNA"/>
</dbReference>
<dbReference type="RefSeq" id="NP_811946.1">
    <property type="nucleotide sequence ID" value="NC_004663.1"/>
</dbReference>
<dbReference type="RefSeq" id="WP_008761751.1">
    <property type="nucleotide sequence ID" value="NZ_UYXG01000001.1"/>
</dbReference>
<dbReference type="SMR" id="Q8A3C0"/>
<dbReference type="FunCoup" id="Q8A3C0">
    <property type="interactions" value="420"/>
</dbReference>
<dbReference type="STRING" id="226186.BT_3034"/>
<dbReference type="PaxDb" id="226186-BT_3034"/>
<dbReference type="EnsemblBacteria" id="AAO78140">
    <property type="protein sequence ID" value="AAO78140"/>
    <property type="gene ID" value="BT_3034"/>
</dbReference>
<dbReference type="GeneID" id="60924218"/>
<dbReference type="KEGG" id="bth:BT_3034"/>
<dbReference type="PATRIC" id="fig|226186.12.peg.3087"/>
<dbReference type="eggNOG" id="COG0669">
    <property type="taxonomic scope" value="Bacteria"/>
</dbReference>
<dbReference type="HOGENOM" id="CLU_100149_1_1_10"/>
<dbReference type="InParanoid" id="Q8A3C0"/>
<dbReference type="OrthoDB" id="9806661at2"/>
<dbReference type="UniPathway" id="UPA00241">
    <property type="reaction ID" value="UER00355"/>
</dbReference>
<dbReference type="Proteomes" id="UP000001414">
    <property type="component" value="Chromosome"/>
</dbReference>
<dbReference type="GO" id="GO:0005737">
    <property type="term" value="C:cytoplasm"/>
    <property type="evidence" value="ECO:0007669"/>
    <property type="project" value="UniProtKB-SubCell"/>
</dbReference>
<dbReference type="GO" id="GO:0005524">
    <property type="term" value="F:ATP binding"/>
    <property type="evidence" value="ECO:0007669"/>
    <property type="project" value="UniProtKB-KW"/>
</dbReference>
<dbReference type="GO" id="GO:0004595">
    <property type="term" value="F:pantetheine-phosphate adenylyltransferase activity"/>
    <property type="evidence" value="ECO:0000318"/>
    <property type="project" value="GO_Central"/>
</dbReference>
<dbReference type="GO" id="GO:0015937">
    <property type="term" value="P:coenzyme A biosynthetic process"/>
    <property type="evidence" value="ECO:0000318"/>
    <property type="project" value="GO_Central"/>
</dbReference>
<dbReference type="Gene3D" id="3.40.50.620">
    <property type="entry name" value="HUPs"/>
    <property type="match status" value="1"/>
</dbReference>
<dbReference type="HAMAP" id="MF_00151">
    <property type="entry name" value="PPAT_bact"/>
    <property type="match status" value="1"/>
</dbReference>
<dbReference type="InterPro" id="IPR004821">
    <property type="entry name" value="Cyt_trans-like"/>
</dbReference>
<dbReference type="InterPro" id="IPR001980">
    <property type="entry name" value="PPAT"/>
</dbReference>
<dbReference type="InterPro" id="IPR014729">
    <property type="entry name" value="Rossmann-like_a/b/a_fold"/>
</dbReference>
<dbReference type="NCBIfam" id="TIGR01510">
    <property type="entry name" value="coaD_prev_kdtB"/>
    <property type="match status" value="1"/>
</dbReference>
<dbReference type="NCBIfam" id="TIGR00125">
    <property type="entry name" value="cyt_tran_rel"/>
    <property type="match status" value="1"/>
</dbReference>
<dbReference type="PANTHER" id="PTHR21342">
    <property type="entry name" value="PHOSPHOPANTETHEINE ADENYLYLTRANSFERASE"/>
    <property type="match status" value="1"/>
</dbReference>
<dbReference type="PANTHER" id="PTHR21342:SF1">
    <property type="entry name" value="PHOSPHOPANTETHEINE ADENYLYLTRANSFERASE"/>
    <property type="match status" value="1"/>
</dbReference>
<dbReference type="Pfam" id="PF01467">
    <property type="entry name" value="CTP_transf_like"/>
    <property type="match status" value="1"/>
</dbReference>
<dbReference type="PRINTS" id="PR01020">
    <property type="entry name" value="LPSBIOSNTHSS"/>
</dbReference>
<dbReference type="SUPFAM" id="SSF52374">
    <property type="entry name" value="Nucleotidylyl transferase"/>
    <property type="match status" value="1"/>
</dbReference>
<name>COAD_BACTN</name>
<evidence type="ECO:0000255" key="1">
    <source>
        <dbReference type="HAMAP-Rule" id="MF_00151"/>
    </source>
</evidence>
<comment type="function">
    <text evidence="1">Reversibly transfers an adenylyl group from ATP to 4'-phosphopantetheine, yielding dephospho-CoA (dPCoA) and pyrophosphate.</text>
</comment>
<comment type="catalytic activity">
    <reaction evidence="1">
        <text>(R)-4'-phosphopantetheine + ATP + H(+) = 3'-dephospho-CoA + diphosphate</text>
        <dbReference type="Rhea" id="RHEA:19801"/>
        <dbReference type="ChEBI" id="CHEBI:15378"/>
        <dbReference type="ChEBI" id="CHEBI:30616"/>
        <dbReference type="ChEBI" id="CHEBI:33019"/>
        <dbReference type="ChEBI" id="CHEBI:57328"/>
        <dbReference type="ChEBI" id="CHEBI:61723"/>
        <dbReference type="EC" id="2.7.7.3"/>
    </reaction>
</comment>
<comment type="cofactor">
    <cofactor evidence="1">
        <name>Mg(2+)</name>
        <dbReference type="ChEBI" id="CHEBI:18420"/>
    </cofactor>
</comment>
<comment type="pathway">
    <text evidence="1">Cofactor biosynthesis; coenzyme A biosynthesis; CoA from (R)-pantothenate: step 4/5.</text>
</comment>
<comment type="subunit">
    <text evidence="1">Homohexamer.</text>
</comment>
<comment type="subcellular location">
    <subcellularLocation>
        <location evidence="1">Cytoplasm</location>
    </subcellularLocation>
</comment>
<comment type="similarity">
    <text evidence="1">Belongs to the bacterial CoaD family.</text>
</comment>